<feature type="chain" id="PRO_0000107616" description="Acetate kinase">
    <location>
        <begin position="1"/>
        <end position="417"/>
    </location>
</feature>
<feature type="active site" description="Proton donor/acceptor" evidence="1">
    <location>
        <position position="147"/>
    </location>
</feature>
<feature type="binding site" evidence="1">
    <location>
        <position position="9"/>
    </location>
    <ligand>
        <name>Mg(2+)</name>
        <dbReference type="ChEBI" id="CHEBI:18420"/>
    </ligand>
</feature>
<feature type="binding site" evidence="1">
    <location>
        <position position="16"/>
    </location>
    <ligand>
        <name>ATP</name>
        <dbReference type="ChEBI" id="CHEBI:30616"/>
    </ligand>
</feature>
<feature type="binding site" evidence="1">
    <location>
        <position position="90"/>
    </location>
    <ligand>
        <name>substrate</name>
    </ligand>
</feature>
<feature type="binding site" evidence="1">
    <location>
        <begin position="207"/>
        <end position="211"/>
    </location>
    <ligand>
        <name>ATP</name>
        <dbReference type="ChEBI" id="CHEBI:30616"/>
    </ligand>
</feature>
<feature type="binding site" evidence="1">
    <location>
        <begin position="282"/>
        <end position="284"/>
    </location>
    <ligand>
        <name>ATP</name>
        <dbReference type="ChEBI" id="CHEBI:30616"/>
    </ligand>
</feature>
<feature type="binding site" evidence="1">
    <location>
        <begin position="330"/>
        <end position="334"/>
    </location>
    <ligand>
        <name>ATP</name>
        <dbReference type="ChEBI" id="CHEBI:30616"/>
    </ligand>
</feature>
<feature type="binding site" evidence="1">
    <location>
        <position position="384"/>
    </location>
    <ligand>
        <name>Mg(2+)</name>
        <dbReference type="ChEBI" id="CHEBI:18420"/>
    </ligand>
</feature>
<feature type="site" description="Transition state stabilizer" evidence="1">
    <location>
        <position position="179"/>
    </location>
</feature>
<feature type="site" description="Transition state stabilizer" evidence="1">
    <location>
        <position position="240"/>
    </location>
</feature>
<keyword id="KW-0067">ATP-binding</keyword>
<keyword id="KW-0963">Cytoplasm</keyword>
<keyword id="KW-0418">Kinase</keyword>
<keyword id="KW-0460">Magnesium</keyword>
<keyword id="KW-0479">Metal-binding</keyword>
<keyword id="KW-0547">Nucleotide-binding</keyword>
<keyword id="KW-0808">Transferase</keyword>
<proteinExistence type="inferred from homology"/>
<gene>
    <name evidence="1" type="primary">ackA</name>
    <name type="ordered locus">SE_1387</name>
</gene>
<accession>Q8CS60</accession>
<organism>
    <name type="scientific">Staphylococcus epidermidis (strain ATCC 12228 / FDA PCI 1200)</name>
    <dbReference type="NCBI Taxonomy" id="176280"/>
    <lineage>
        <taxon>Bacteria</taxon>
        <taxon>Bacillati</taxon>
        <taxon>Bacillota</taxon>
        <taxon>Bacilli</taxon>
        <taxon>Bacillales</taxon>
        <taxon>Staphylococcaceae</taxon>
        <taxon>Staphylococcus</taxon>
    </lineage>
</organism>
<protein>
    <recommendedName>
        <fullName evidence="1">Acetate kinase</fullName>
        <ecNumber evidence="1">2.7.2.1</ecNumber>
    </recommendedName>
    <alternativeName>
        <fullName evidence="1">Acetokinase</fullName>
    </alternativeName>
</protein>
<evidence type="ECO:0000255" key="1">
    <source>
        <dbReference type="HAMAP-Rule" id="MF_00020"/>
    </source>
</evidence>
<name>ACKA_STAES</name>
<reference key="1">
    <citation type="journal article" date="2003" name="Mol. Microbiol.">
        <title>Genome-based analysis of virulence genes in a non-biofilm-forming Staphylococcus epidermidis strain (ATCC 12228).</title>
        <authorList>
            <person name="Zhang Y.-Q."/>
            <person name="Ren S.-X."/>
            <person name="Li H.-L."/>
            <person name="Wang Y.-X."/>
            <person name="Fu G."/>
            <person name="Yang J."/>
            <person name="Qin Z.-Q."/>
            <person name="Miao Y.-G."/>
            <person name="Wang W.-Y."/>
            <person name="Chen R.-S."/>
            <person name="Shen Y."/>
            <person name="Chen Z."/>
            <person name="Yuan Z.-H."/>
            <person name="Zhao G.-P."/>
            <person name="Qu D."/>
            <person name="Danchin A."/>
            <person name="Wen Y.-M."/>
        </authorList>
    </citation>
    <scope>NUCLEOTIDE SEQUENCE [LARGE SCALE GENOMIC DNA]</scope>
    <source>
        <strain>ATCC 12228 / FDA PCI 1200</strain>
    </source>
</reference>
<comment type="function">
    <text evidence="1">Catalyzes the formation of acetyl phosphate from acetate and ATP. Can also catalyze the reverse reaction.</text>
</comment>
<comment type="catalytic activity">
    <reaction evidence="1">
        <text>acetate + ATP = acetyl phosphate + ADP</text>
        <dbReference type="Rhea" id="RHEA:11352"/>
        <dbReference type="ChEBI" id="CHEBI:22191"/>
        <dbReference type="ChEBI" id="CHEBI:30089"/>
        <dbReference type="ChEBI" id="CHEBI:30616"/>
        <dbReference type="ChEBI" id="CHEBI:456216"/>
        <dbReference type="EC" id="2.7.2.1"/>
    </reaction>
</comment>
<comment type="cofactor">
    <cofactor evidence="1">
        <name>Mg(2+)</name>
        <dbReference type="ChEBI" id="CHEBI:18420"/>
    </cofactor>
    <cofactor evidence="1">
        <name>Mn(2+)</name>
        <dbReference type="ChEBI" id="CHEBI:29035"/>
    </cofactor>
    <text evidence="1">Mg(2+). Can also accept Mn(2+).</text>
</comment>
<comment type="pathway">
    <text evidence="1">Metabolic intermediate biosynthesis; acetyl-CoA biosynthesis; acetyl-CoA from acetate: step 1/2.</text>
</comment>
<comment type="subunit">
    <text evidence="1">Homodimer.</text>
</comment>
<comment type="subcellular location">
    <subcellularLocation>
        <location evidence="1">Cytoplasm</location>
    </subcellularLocation>
</comment>
<comment type="similarity">
    <text evidence="1">Belongs to the acetokinase family.</text>
</comment>
<sequence length="417" mass="46338">MSKLILAVNAGSSSLKFQLIKMPEEKLVTKGVIERIGLSDSIFTIHVNGEKLTDIRDIHNHEEAVNIMLDSFKEHEMIKDITDIQGTGHRVVHGGETFPKSVVVTDEVESQIEELSELAPLHNPANLMGIRAFRKLLPEIPHVAVFDTSFHQTMPEQAYLYSLPYHYYEDYGIRKYGFHGTSHKYVSRRAAQIVGRPIEDLRIISCHIGNGASIAAIDGGESIDTSMGFTPLAGVTMGTRSGNLDPALIPFIMEKTGKTADEVLEILNKESGLLGLTGTSSDLRDLTEEAKHGRQRSRVALDLFASKIHKYIGSYAARMHGVDVIVFTAGIGENSHIIRGKVLEGLEFMGVYWDPKKNESLHGEEGYINYPHSPVKVLVVPTDEEVMISRDVIKYGKLNDNTPKKEEFDTNESIEVN</sequence>
<dbReference type="EC" id="2.7.2.1" evidence="1"/>
<dbReference type="EMBL" id="AE015929">
    <property type="protein sequence ID" value="AAO04986.1"/>
    <property type="molecule type" value="Genomic_DNA"/>
</dbReference>
<dbReference type="RefSeq" id="NP_764942.1">
    <property type="nucleotide sequence ID" value="NC_004461.1"/>
</dbReference>
<dbReference type="RefSeq" id="WP_001830869.1">
    <property type="nucleotide sequence ID" value="NZ_WBME01000070.1"/>
</dbReference>
<dbReference type="SMR" id="Q8CS60"/>
<dbReference type="KEGG" id="sep:SE_1387"/>
<dbReference type="PATRIC" id="fig|176280.10.peg.1355"/>
<dbReference type="eggNOG" id="COG0282">
    <property type="taxonomic scope" value="Bacteria"/>
</dbReference>
<dbReference type="HOGENOM" id="CLU_020352_0_1_9"/>
<dbReference type="OrthoDB" id="9802453at2"/>
<dbReference type="UniPathway" id="UPA00340">
    <property type="reaction ID" value="UER00458"/>
</dbReference>
<dbReference type="Proteomes" id="UP000001411">
    <property type="component" value="Chromosome"/>
</dbReference>
<dbReference type="GO" id="GO:0005737">
    <property type="term" value="C:cytoplasm"/>
    <property type="evidence" value="ECO:0007669"/>
    <property type="project" value="UniProtKB-SubCell"/>
</dbReference>
<dbReference type="GO" id="GO:0008776">
    <property type="term" value="F:acetate kinase activity"/>
    <property type="evidence" value="ECO:0007669"/>
    <property type="project" value="UniProtKB-UniRule"/>
</dbReference>
<dbReference type="GO" id="GO:0005524">
    <property type="term" value="F:ATP binding"/>
    <property type="evidence" value="ECO:0007669"/>
    <property type="project" value="UniProtKB-KW"/>
</dbReference>
<dbReference type="GO" id="GO:0000287">
    <property type="term" value="F:magnesium ion binding"/>
    <property type="evidence" value="ECO:0007669"/>
    <property type="project" value="UniProtKB-UniRule"/>
</dbReference>
<dbReference type="GO" id="GO:0006083">
    <property type="term" value="P:acetate metabolic process"/>
    <property type="evidence" value="ECO:0007669"/>
    <property type="project" value="TreeGrafter"/>
</dbReference>
<dbReference type="GO" id="GO:0006085">
    <property type="term" value="P:acetyl-CoA biosynthetic process"/>
    <property type="evidence" value="ECO:0007669"/>
    <property type="project" value="UniProtKB-UniRule"/>
</dbReference>
<dbReference type="CDD" id="cd24010">
    <property type="entry name" value="ASKHA_NBD_AcK_PK"/>
    <property type="match status" value="1"/>
</dbReference>
<dbReference type="Gene3D" id="3.30.420.40">
    <property type="match status" value="2"/>
</dbReference>
<dbReference type="HAMAP" id="MF_00020">
    <property type="entry name" value="Acetate_kinase"/>
    <property type="match status" value="1"/>
</dbReference>
<dbReference type="InterPro" id="IPR004372">
    <property type="entry name" value="Ac/propionate_kinase"/>
</dbReference>
<dbReference type="InterPro" id="IPR000890">
    <property type="entry name" value="Aliphatic_acid_kin_short-chain"/>
</dbReference>
<dbReference type="InterPro" id="IPR023865">
    <property type="entry name" value="Aliphatic_acid_kinase_CS"/>
</dbReference>
<dbReference type="InterPro" id="IPR043129">
    <property type="entry name" value="ATPase_NBD"/>
</dbReference>
<dbReference type="NCBIfam" id="TIGR00016">
    <property type="entry name" value="ackA"/>
    <property type="match status" value="1"/>
</dbReference>
<dbReference type="PANTHER" id="PTHR21060">
    <property type="entry name" value="ACETATE KINASE"/>
    <property type="match status" value="1"/>
</dbReference>
<dbReference type="PANTHER" id="PTHR21060:SF15">
    <property type="entry name" value="ACETATE KINASE-RELATED"/>
    <property type="match status" value="1"/>
</dbReference>
<dbReference type="Pfam" id="PF00871">
    <property type="entry name" value="Acetate_kinase"/>
    <property type="match status" value="1"/>
</dbReference>
<dbReference type="PIRSF" id="PIRSF000722">
    <property type="entry name" value="Acetate_prop_kin"/>
    <property type="match status" value="1"/>
</dbReference>
<dbReference type="PRINTS" id="PR00471">
    <property type="entry name" value="ACETATEKNASE"/>
</dbReference>
<dbReference type="SUPFAM" id="SSF53067">
    <property type="entry name" value="Actin-like ATPase domain"/>
    <property type="match status" value="2"/>
</dbReference>
<dbReference type="PROSITE" id="PS01075">
    <property type="entry name" value="ACETATE_KINASE_1"/>
    <property type="match status" value="1"/>
</dbReference>
<dbReference type="PROSITE" id="PS01076">
    <property type="entry name" value="ACETATE_KINASE_2"/>
    <property type="match status" value="1"/>
</dbReference>